<name>NUBP1_DROER</name>
<gene>
    <name evidence="1" type="primary">Nubp1</name>
    <name type="ORF">GG22765</name>
</gene>
<feature type="chain" id="PRO_0000382602" description="Cytosolic Fe-S cluster assembly factor Nubp1 homolog">
    <location>
        <begin position="1"/>
        <end position="311"/>
    </location>
</feature>
<feature type="binding site" evidence="2">
    <location>
        <position position="9"/>
    </location>
    <ligand>
        <name>[4Fe-4S] cluster</name>
        <dbReference type="ChEBI" id="CHEBI:49883"/>
        <label>1</label>
    </ligand>
</feature>
<feature type="binding site" evidence="2">
    <location>
        <position position="23"/>
    </location>
    <ligand>
        <name>[4Fe-4S] cluster</name>
        <dbReference type="ChEBI" id="CHEBI:49883"/>
        <label>1</label>
    </ligand>
</feature>
<feature type="binding site" evidence="2">
    <location>
        <position position="26"/>
    </location>
    <ligand>
        <name>[4Fe-4S] cluster</name>
        <dbReference type="ChEBI" id="CHEBI:49883"/>
        <label>1</label>
    </ligand>
</feature>
<feature type="binding site" evidence="2">
    <location>
        <position position="32"/>
    </location>
    <ligand>
        <name>[4Fe-4S] cluster</name>
        <dbReference type="ChEBI" id="CHEBI:49883"/>
        <label>1</label>
    </ligand>
</feature>
<feature type="binding site" evidence="2">
    <location>
        <begin position="63"/>
        <end position="70"/>
    </location>
    <ligand>
        <name>ATP</name>
        <dbReference type="ChEBI" id="CHEBI:30616"/>
    </ligand>
</feature>
<feature type="binding site" evidence="2">
    <location>
        <position position="240"/>
    </location>
    <ligand>
        <name>[4Fe-4S] cluster</name>
        <dbReference type="ChEBI" id="CHEBI:49883"/>
        <label>2</label>
        <note>ligand shared with heterodimeric partner</note>
    </ligand>
</feature>
<feature type="binding site" evidence="2">
    <location>
        <position position="243"/>
    </location>
    <ligand>
        <name>[4Fe-4S] cluster</name>
        <dbReference type="ChEBI" id="CHEBI:49883"/>
        <label>2</label>
        <note>ligand shared with heterodimeric partner</note>
    </ligand>
</feature>
<accession>B3NNJ9</accession>
<sequence length="311" mass="32974">MQAPPPEHCPGLESEQAGKASACAGCPNQGVCSDPNKKLEDPGKALVVESMKDVKHKLLILSGKGGVGKSTVTSLLTRYLARSNPDSNFGVLDIDICGPSQPRLMGALGESVHQSGYGWSPVGIEDNVCLMSIGFLLGSVDDAIIWRGPKKNGMIRQFLSEVDWGNLDLLLLDTPPGTSDEHLSVVSYLKDDTNPESLCAVMVTTPQEVSLLDVRKEINFCKKQNIPIVGVIENMSSFRCGNCGNSSEIFPAKTGGAAAMCAEMGIPLLGSLPLDQQIAKACDSGEDITEFKNVTTEALDGICSKIIASFS</sequence>
<comment type="function">
    <text evidence="2">Component of the cytosolic iron-sulfur (Fe/S) protein assembly (CIA) machinery. Required for maturation of extramitochondrial Fe-S proteins. The Nubp1-Nubp2 heterotetramer forms a Fe-S scaffold complex, mediating the de novo assembly of an Fe-S cluster and its transfer to target apoproteins.</text>
</comment>
<comment type="cofactor">
    <cofactor evidence="2">
        <name>[4Fe-4S] cluster</name>
        <dbReference type="ChEBI" id="CHEBI:49883"/>
    </cofactor>
    <text evidence="2">Binds 4 [4Fe-4S] clusters per heterotetramer. Contains two stable clusters in the N-termini of Nubp1 and two labile, bridging clusters between subunits of the Nubp1-Nubp2 heterotetramer.</text>
</comment>
<comment type="subunit">
    <text evidence="2">Heterotetramer of 2 Nubp1 and 2 Nubp2 chains.</text>
</comment>
<comment type="subcellular location">
    <subcellularLocation>
        <location evidence="2">Cytoplasm</location>
    </subcellularLocation>
</comment>
<comment type="similarity">
    <text evidence="2">Belongs to the Mrp/NBP35 ATP-binding proteins family. NUBP1/NBP35 subfamily.</text>
</comment>
<reference key="1">
    <citation type="journal article" date="2007" name="Nature">
        <title>Evolution of genes and genomes on the Drosophila phylogeny.</title>
        <authorList>
            <consortium name="Drosophila 12 genomes consortium"/>
        </authorList>
    </citation>
    <scope>NUCLEOTIDE SEQUENCE [LARGE SCALE GENOMIC DNA]</scope>
    <source>
        <strain>Tucson 14021-0224.01</strain>
    </source>
</reference>
<dbReference type="EMBL" id="CH954179">
    <property type="protein sequence ID" value="EDV56650.1"/>
    <property type="molecule type" value="Genomic_DNA"/>
</dbReference>
<dbReference type="SMR" id="B3NNJ9"/>
<dbReference type="EnsemblMetazoa" id="FBtr0142819">
    <property type="protein sequence ID" value="FBpp0141311"/>
    <property type="gene ID" value="FBgn0114930"/>
</dbReference>
<dbReference type="EnsemblMetazoa" id="XM_001976214.3">
    <property type="protein sequence ID" value="XP_001976250.1"/>
    <property type="gene ID" value="LOC6547613"/>
</dbReference>
<dbReference type="GeneID" id="6547613"/>
<dbReference type="KEGG" id="der:6547613"/>
<dbReference type="CTD" id="4682"/>
<dbReference type="eggNOG" id="KOG3022">
    <property type="taxonomic scope" value="Eukaryota"/>
</dbReference>
<dbReference type="HOGENOM" id="CLU_024839_0_1_1"/>
<dbReference type="OMA" id="VSGCPMR"/>
<dbReference type="OrthoDB" id="1741334at2759"/>
<dbReference type="PhylomeDB" id="B3NNJ9"/>
<dbReference type="Proteomes" id="UP000008711">
    <property type="component" value="Unassembled WGS sequence"/>
</dbReference>
<dbReference type="GO" id="GO:0005829">
    <property type="term" value="C:cytosol"/>
    <property type="evidence" value="ECO:0000250"/>
    <property type="project" value="UniProtKB"/>
</dbReference>
<dbReference type="GO" id="GO:0051539">
    <property type="term" value="F:4 iron, 4 sulfur cluster binding"/>
    <property type="evidence" value="ECO:0007669"/>
    <property type="project" value="UniProtKB-UniRule"/>
</dbReference>
<dbReference type="GO" id="GO:0005524">
    <property type="term" value="F:ATP binding"/>
    <property type="evidence" value="ECO:0007669"/>
    <property type="project" value="UniProtKB-KW"/>
</dbReference>
<dbReference type="GO" id="GO:0140663">
    <property type="term" value="F:ATP-dependent FeS chaperone activity"/>
    <property type="evidence" value="ECO:0007669"/>
    <property type="project" value="InterPro"/>
</dbReference>
<dbReference type="GO" id="GO:0051536">
    <property type="term" value="F:iron-sulfur cluster binding"/>
    <property type="evidence" value="ECO:0000250"/>
    <property type="project" value="UniProtKB"/>
</dbReference>
<dbReference type="GO" id="GO:0046872">
    <property type="term" value="F:metal ion binding"/>
    <property type="evidence" value="ECO:0007669"/>
    <property type="project" value="UniProtKB-KW"/>
</dbReference>
<dbReference type="GO" id="GO:0016226">
    <property type="term" value="P:iron-sulfur cluster assembly"/>
    <property type="evidence" value="ECO:0000250"/>
    <property type="project" value="UniProtKB"/>
</dbReference>
<dbReference type="CDD" id="cd02037">
    <property type="entry name" value="Mrp_NBP35"/>
    <property type="match status" value="1"/>
</dbReference>
<dbReference type="FunFam" id="3.40.50.300:FF:001759">
    <property type="entry name" value="Cytosolic Fe-S cluster assembly factor NUBP1 homolog"/>
    <property type="match status" value="1"/>
</dbReference>
<dbReference type="Gene3D" id="3.40.50.300">
    <property type="entry name" value="P-loop containing nucleotide triphosphate hydrolases"/>
    <property type="match status" value="1"/>
</dbReference>
<dbReference type="HAMAP" id="MF_02040">
    <property type="entry name" value="Mrp_NBP35"/>
    <property type="match status" value="1"/>
</dbReference>
<dbReference type="HAMAP" id="MF_03038">
    <property type="entry name" value="NUBP1"/>
    <property type="match status" value="1"/>
</dbReference>
<dbReference type="InterPro" id="IPR019591">
    <property type="entry name" value="Mrp/NBP35_ATP-bd"/>
</dbReference>
<dbReference type="InterPro" id="IPR028601">
    <property type="entry name" value="NUBP1/Nbp35"/>
</dbReference>
<dbReference type="InterPro" id="IPR027417">
    <property type="entry name" value="P-loop_NTPase"/>
</dbReference>
<dbReference type="InterPro" id="IPR033756">
    <property type="entry name" value="YlxH/NBP35"/>
</dbReference>
<dbReference type="PANTHER" id="PTHR23264:SF35">
    <property type="entry name" value="CYTOSOLIC FE-S CLUSTER ASSEMBLY FACTOR NUBP1"/>
    <property type="match status" value="1"/>
</dbReference>
<dbReference type="PANTHER" id="PTHR23264">
    <property type="entry name" value="NUCLEOTIDE-BINDING PROTEIN NBP35 YEAST -RELATED"/>
    <property type="match status" value="1"/>
</dbReference>
<dbReference type="Pfam" id="PF10609">
    <property type="entry name" value="ParA"/>
    <property type="match status" value="1"/>
</dbReference>
<dbReference type="SUPFAM" id="SSF52540">
    <property type="entry name" value="P-loop containing nucleoside triphosphate hydrolases"/>
    <property type="match status" value="1"/>
</dbReference>
<keyword id="KW-0004">4Fe-4S</keyword>
<keyword id="KW-0067">ATP-binding</keyword>
<keyword id="KW-0963">Cytoplasm</keyword>
<keyword id="KW-0408">Iron</keyword>
<keyword id="KW-0411">Iron-sulfur</keyword>
<keyword id="KW-0479">Metal-binding</keyword>
<keyword id="KW-0547">Nucleotide-binding</keyword>
<evidence type="ECO:0000250" key="1">
    <source>
        <dbReference type="UniProtKB" id="Q9VJI9"/>
    </source>
</evidence>
<evidence type="ECO:0000255" key="2">
    <source>
        <dbReference type="HAMAP-Rule" id="MF_03038"/>
    </source>
</evidence>
<protein>
    <recommendedName>
        <fullName evidence="2">Cytosolic Fe-S cluster assembly factor Nubp1 homolog</fullName>
    </recommendedName>
</protein>
<organism>
    <name type="scientific">Drosophila erecta</name>
    <name type="common">Fruit fly</name>
    <dbReference type="NCBI Taxonomy" id="7220"/>
    <lineage>
        <taxon>Eukaryota</taxon>
        <taxon>Metazoa</taxon>
        <taxon>Ecdysozoa</taxon>
        <taxon>Arthropoda</taxon>
        <taxon>Hexapoda</taxon>
        <taxon>Insecta</taxon>
        <taxon>Pterygota</taxon>
        <taxon>Neoptera</taxon>
        <taxon>Endopterygota</taxon>
        <taxon>Diptera</taxon>
        <taxon>Brachycera</taxon>
        <taxon>Muscomorpha</taxon>
        <taxon>Ephydroidea</taxon>
        <taxon>Drosophilidae</taxon>
        <taxon>Drosophila</taxon>
        <taxon>Sophophora</taxon>
    </lineage>
</organism>
<proteinExistence type="inferred from homology"/>